<protein>
    <recommendedName>
        <fullName evidence="1">Adenylosuccinate synthetase</fullName>
        <shortName evidence="1">AMPSase</shortName>
        <shortName evidence="1">AdSS</shortName>
        <ecNumber evidence="1">6.3.4.4</ecNumber>
    </recommendedName>
    <alternativeName>
        <fullName evidence="1">IMP--aspartate ligase</fullName>
    </alternativeName>
</protein>
<keyword id="KW-0963">Cytoplasm</keyword>
<keyword id="KW-0342">GTP-binding</keyword>
<keyword id="KW-0436">Ligase</keyword>
<keyword id="KW-0460">Magnesium</keyword>
<keyword id="KW-0479">Metal-binding</keyword>
<keyword id="KW-0547">Nucleotide-binding</keyword>
<keyword id="KW-0658">Purine biosynthesis</keyword>
<keyword id="KW-1185">Reference proteome</keyword>
<comment type="function">
    <text evidence="1">Plays an important role in the de novo pathway of purine nucleotide biosynthesis. Catalyzes the first committed step in the biosynthesis of AMP from IMP.</text>
</comment>
<comment type="catalytic activity">
    <reaction evidence="1">
        <text>IMP + L-aspartate + GTP = N(6)-(1,2-dicarboxyethyl)-AMP + GDP + phosphate + 2 H(+)</text>
        <dbReference type="Rhea" id="RHEA:15753"/>
        <dbReference type="ChEBI" id="CHEBI:15378"/>
        <dbReference type="ChEBI" id="CHEBI:29991"/>
        <dbReference type="ChEBI" id="CHEBI:37565"/>
        <dbReference type="ChEBI" id="CHEBI:43474"/>
        <dbReference type="ChEBI" id="CHEBI:57567"/>
        <dbReference type="ChEBI" id="CHEBI:58053"/>
        <dbReference type="ChEBI" id="CHEBI:58189"/>
        <dbReference type="EC" id="6.3.4.4"/>
    </reaction>
</comment>
<comment type="cofactor">
    <cofactor evidence="1">
        <name>Mg(2+)</name>
        <dbReference type="ChEBI" id="CHEBI:18420"/>
    </cofactor>
    <text evidence="1">Binds 1 Mg(2+) ion per subunit.</text>
</comment>
<comment type="pathway">
    <text evidence="1">Purine metabolism; AMP biosynthesis via de novo pathway; AMP from IMP: step 1/2.</text>
</comment>
<comment type="subunit">
    <text evidence="1">Homodimer.</text>
</comment>
<comment type="subcellular location">
    <subcellularLocation>
        <location evidence="1">Cytoplasm</location>
    </subcellularLocation>
</comment>
<comment type="similarity">
    <text evidence="1">Belongs to the adenylosuccinate synthetase family.</text>
</comment>
<evidence type="ECO:0000255" key="1">
    <source>
        <dbReference type="HAMAP-Rule" id="MF_00011"/>
    </source>
</evidence>
<organism>
    <name type="scientific">Erythrobacter litoralis (strain HTCC2594)</name>
    <dbReference type="NCBI Taxonomy" id="314225"/>
    <lineage>
        <taxon>Bacteria</taxon>
        <taxon>Pseudomonadati</taxon>
        <taxon>Pseudomonadota</taxon>
        <taxon>Alphaproteobacteria</taxon>
        <taxon>Sphingomonadales</taxon>
        <taxon>Erythrobacteraceae</taxon>
        <taxon>Erythrobacter/Porphyrobacter group</taxon>
        <taxon>Erythrobacter</taxon>
    </lineage>
</organism>
<proteinExistence type="inferred from homology"/>
<feature type="chain" id="PRO_1000000818" description="Adenylosuccinate synthetase">
    <location>
        <begin position="1"/>
        <end position="429"/>
    </location>
</feature>
<feature type="active site" description="Proton acceptor" evidence="1">
    <location>
        <position position="13"/>
    </location>
</feature>
<feature type="active site" description="Proton donor" evidence="1">
    <location>
        <position position="41"/>
    </location>
</feature>
<feature type="binding site" evidence="1">
    <location>
        <begin position="12"/>
        <end position="18"/>
    </location>
    <ligand>
        <name>GTP</name>
        <dbReference type="ChEBI" id="CHEBI:37565"/>
    </ligand>
</feature>
<feature type="binding site" description="in other chain" evidence="1">
    <location>
        <begin position="13"/>
        <end position="16"/>
    </location>
    <ligand>
        <name>IMP</name>
        <dbReference type="ChEBI" id="CHEBI:58053"/>
        <note>ligand shared between dimeric partners</note>
    </ligand>
</feature>
<feature type="binding site" evidence="1">
    <location>
        <position position="13"/>
    </location>
    <ligand>
        <name>Mg(2+)</name>
        <dbReference type="ChEBI" id="CHEBI:18420"/>
    </ligand>
</feature>
<feature type="binding site" description="in other chain" evidence="1">
    <location>
        <begin position="38"/>
        <end position="41"/>
    </location>
    <ligand>
        <name>IMP</name>
        <dbReference type="ChEBI" id="CHEBI:58053"/>
        <note>ligand shared between dimeric partners</note>
    </ligand>
</feature>
<feature type="binding site" evidence="1">
    <location>
        <begin position="40"/>
        <end position="42"/>
    </location>
    <ligand>
        <name>GTP</name>
        <dbReference type="ChEBI" id="CHEBI:37565"/>
    </ligand>
</feature>
<feature type="binding site" evidence="1">
    <location>
        <position position="40"/>
    </location>
    <ligand>
        <name>Mg(2+)</name>
        <dbReference type="ChEBI" id="CHEBI:18420"/>
    </ligand>
</feature>
<feature type="binding site" description="in other chain" evidence="1">
    <location>
        <position position="129"/>
    </location>
    <ligand>
        <name>IMP</name>
        <dbReference type="ChEBI" id="CHEBI:58053"/>
        <note>ligand shared between dimeric partners</note>
    </ligand>
</feature>
<feature type="binding site" evidence="1">
    <location>
        <position position="143"/>
    </location>
    <ligand>
        <name>IMP</name>
        <dbReference type="ChEBI" id="CHEBI:58053"/>
        <note>ligand shared between dimeric partners</note>
    </ligand>
</feature>
<feature type="binding site" description="in other chain" evidence="1">
    <location>
        <position position="223"/>
    </location>
    <ligand>
        <name>IMP</name>
        <dbReference type="ChEBI" id="CHEBI:58053"/>
        <note>ligand shared between dimeric partners</note>
    </ligand>
</feature>
<feature type="binding site" description="in other chain" evidence="1">
    <location>
        <position position="238"/>
    </location>
    <ligand>
        <name>IMP</name>
        <dbReference type="ChEBI" id="CHEBI:58053"/>
        <note>ligand shared between dimeric partners</note>
    </ligand>
</feature>
<feature type="binding site" evidence="1">
    <location>
        <begin position="298"/>
        <end position="304"/>
    </location>
    <ligand>
        <name>substrate</name>
    </ligand>
</feature>
<feature type="binding site" description="in other chain" evidence="1">
    <location>
        <position position="302"/>
    </location>
    <ligand>
        <name>IMP</name>
        <dbReference type="ChEBI" id="CHEBI:58053"/>
        <note>ligand shared between dimeric partners</note>
    </ligand>
</feature>
<feature type="binding site" evidence="1">
    <location>
        <position position="304"/>
    </location>
    <ligand>
        <name>GTP</name>
        <dbReference type="ChEBI" id="CHEBI:37565"/>
    </ligand>
</feature>
<feature type="binding site" evidence="1">
    <location>
        <begin position="330"/>
        <end position="332"/>
    </location>
    <ligand>
        <name>GTP</name>
        <dbReference type="ChEBI" id="CHEBI:37565"/>
    </ligand>
</feature>
<feature type="binding site" evidence="1">
    <location>
        <begin position="412"/>
        <end position="414"/>
    </location>
    <ligand>
        <name>GTP</name>
        <dbReference type="ChEBI" id="CHEBI:37565"/>
    </ligand>
</feature>
<accession>Q2NCV0</accession>
<gene>
    <name evidence="1" type="primary">purA</name>
    <name type="ordered locus">ELI_01995</name>
</gene>
<reference key="1">
    <citation type="journal article" date="2009" name="J. Bacteriol.">
        <title>Complete genome sequence of Erythrobacter litoralis HTCC2594.</title>
        <authorList>
            <person name="Oh H.M."/>
            <person name="Giovannoni S.J."/>
            <person name="Ferriera S."/>
            <person name="Johnson J."/>
            <person name="Cho J.C."/>
        </authorList>
    </citation>
    <scope>NUCLEOTIDE SEQUENCE [LARGE SCALE GENOMIC DNA]</scope>
    <source>
        <strain>HTCC2594</strain>
    </source>
</reference>
<dbReference type="EC" id="6.3.4.4" evidence="1"/>
<dbReference type="EMBL" id="CP000157">
    <property type="protein sequence ID" value="ABC62491.1"/>
    <property type="molecule type" value="Genomic_DNA"/>
</dbReference>
<dbReference type="RefSeq" id="WP_011413367.1">
    <property type="nucleotide sequence ID" value="NC_007722.1"/>
</dbReference>
<dbReference type="SMR" id="Q2NCV0"/>
<dbReference type="STRING" id="314225.ELI_01995"/>
<dbReference type="KEGG" id="eli:ELI_01995"/>
<dbReference type="eggNOG" id="COG0104">
    <property type="taxonomic scope" value="Bacteria"/>
</dbReference>
<dbReference type="HOGENOM" id="CLU_029848_0_0_5"/>
<dbReference type="OrthoDB" id="9807553at2"/>
<dbReference type="UniPathway" id="UPA00075">
    <property type="reaction ID" value="UER00335"/>
</dbReference>
<dbReference type="Proteomes" id="UP000008808">
    <property type="component" value="Chromosome"/>
</dbReference>
<dbReference type="GO" id="GO:0005737">
    <property type="term" value="C:cytoplasm"/>
    <property type="evidence" value="ECO:0007669"/>
    <property type="project" value="UniProtKB-SubCell"/>
</dbReference>
<dbReference type="GO" id="GO:0004019">
    <property type="term" value="F:adenylosuccinate synthase activity"/>
    <property type="evidence" value="ECO:0007669"/>
    <property type="project" value="UniProtKB-UniRule"/>
</dbReference>
<dbReference type="GO" id="GO:0005525">
    <property type="term" value="F:GTP binding"/>
    <property type="evidence" value="ECO:0007669"/>
    <property type="project" value="UniProtKB-UniRule"/>
</dbReference>
<dbReference type="GO" id="GO:0000287">
    <property type="term" value="F:magnesium ion binding"/>
    <property type="evidence" value="ECO:0007669"/>
    <property type="project" value="UniProtKB-UniRule"/>
</dbReference>
<dbReference type="GO" id="GO:0044208">
    <property type="term" value="P:'de novo' AMP biosynthetic process"/>
    <property type="evidence" value="ECO:0007669"/>
    <property type="project" value="UniProtKB-UniRule"/>
</dbReference>
<dbReference type="GO" id="GO:0046040">
    <property type="term" value="P:IMP metabolic process"/>
    <property type="evidence" value="ECO:0007669"/>
    <property type="project" value="TreeGrafter"/>
</dbReference>
<dbReference type="CDD" id="cd03108">
    <property type="entry name" value="AdSS"/>
    <property type="match status" value="1"/>
</dbReference>
<dbReference type="FunFam" id="1.10.300.10:FF:000001">
    <property type="entry name" value="Adenylosuccinate synthetase"/>
    <property type="match status" value="1"/>
</dbReference>
<dbReference type="FunFam" id="3.90.170.10:FF:000001">
    <property type="entry name" value="Adenylosuccinate synthetase"/>
    <property type="match status" value="1"/>
</dbReference>
<dbReference type="Gene3D" id="3.40.440.10">
    <property type="entry name" value="Adenylosuccinate Synthetase, subunit A, domain 1"/>
    <property type="match status" value="1"/>
</dbReference>
<dbReference type="Gene3D" id="1.10.300.10">
    <property type="entry name" value="Adenylosuccinate Synthetase, subunit A, domain 2"/>
    <property type="match status" value="1"/>
</dbReference>
<dbReference type="Gene3D" id="3.90.170.10">
    <property type="entry name" value="Adenylosuccinate Synthetase, subunit A, domain 3"/>
    <property type="match status" value="1"/>
</dbReference>
<dbReference type="HAMAP" id="MF_00011">
    <property type="entry name" value="Adenylosucc_synth"/>
    <property type="match status" value="1"/>
</dbReference>
<dbReference type="InterPro" id="IPR018220">
    <property type="entry name" value="Adenylosuccin_syn_GTP-bd"/>
</dbReference>
<dbReference type="InterPro" id="IPR033128">
    <property type="entry name" value="Adenylosuccin_syn_Lys_AS"/>
</dbReference>
<dbReference type="InterPro" id="IPR042109">
    <property type="entry name" value="Adenylosuccinate_synth_dom1"/>
</dbReference>
<dbReference type="InterPro" id="IPR042110">
    <property type="entry name" value="Adenylosuccinate_synth_dom2"/>
</dbReference>
<dbReference type="InterPro" id="IPR042111">
    <property type="entry name" value="Adenylosuccinate_synth_dom3"/>
</dbReference>
<dbReference type="InterPro" id="IPR001114">
    <property type="entry name" value="Adenylosuccinate_synthetase"/>
</dbReference>
<dbReference type="InterPro" id="IPR027417">
    <property type="entry name" value="P-loop_NTPase"/>
</dbReference>
<dbReference type="NCBIfam" id="NF002223">
    <property type="entry name" value="PRK01117.1"/>
    <property type="match status" value="1"/>
</dbReference>
<dbReference type="NCBIfam" id="TIGR00184">
    <property type="entry name" value="purA"/>
    <property type="match status" value="1"/>
</dbReference>
<dbReference type="PANTHER" id="PTHR11846">
    <property type="entry name" value="ADENYLOSUCCINATE SYNTHETASE"/>
    <property type="match status" value="1"/>
</dbReference>
<dbReference type="PANTHER" id="PTHR11846:SF0">
    <property type="entry name" value="ADENYLOSUCCINATE SYNTHETASE"/>
    <property type="match status" value="1"/>
</dbReference>
<dbReference type="Pfam" id="PF00709">
    <property type="entry name" value="Adenylsucc_synt"/>
    <property type="match status" value="1"/>
</dbReference>
<dbReference type="SMART" id="SM00788">
    <property type="entry name" value="Adenylsucc_synt"/>
    <property type="match status" value="1"/>
</dbReference>
<dbReference type="SUPFAM" id="SSF52540">
    <property type="entry name" value="P-loop containing nucleoside triphosphate hydrolases"/>
    <property type="match status" value="1"/>
</dbReference>
<dbReference type="PROSITE" id="PS01266">
    <property type="entry name" value="ADENYLOSUCCIN_SYN_1"/>
    <property type="match status" value="1"/>
</dbReference>
<dbReference type="PROSITE" id="PS00513">
    <property type="entry name" value="ADENYLOSUCCIN_SYN_2"/>
    <property type="match status" value="1"/>
</dbReference>
<sequence>MANVTVIGAQWGDEGKGKIVDWLADRADAVVRFQGGHNAGHTLVVDGTTYKLSLLPSGIVSGTLSIIGNGVVLDPWALKQEVEKLEGQGVTINDDNFAIADNCPLILPIHRDLDGLREAAAGTGKIGTTGRGIGPAYEDKVGRRAIRVCDLEHLDSLEPQLDRLCAHHDALRAGFEEPPVDRERLLGDLREIAPFVLRFAQPVWKRLKKVRKAGAKILFEGAQGVLLDVDHGTYPFVTSSNTVSGTAASGSGLGPGAAGFVLGIVKAYTTRVGSGPFPTELDDEIGQRLGERGHEFGTVTGRQRRVGWFDAVLVRQTCAISGVTGIALTKIDVLDGLDTVKICTGYRLNNNVYDYLPSHAASQAAVEPIYEEMEGWSESTAGARSFADLPANAVKYIQRIQELIECPVALVSTSPERDDTILMRDPFMD</sequence>
<name>PURA_ERYLH</name>